<sequence length="366" mass="40337">MTDLDNLKADLIGQISQSGDLAGLESVRVHALGKQGVVTALLKSLGKMTPEERQEKGPVIHSLRQAVAQGIADRKQALETALLNEKLASETIDLSLPSPKMPKGSLHPVSQVMDELAEIFADLGFAVASGPEIEDEWHNFSALNIPESHPARAMHDTFYFEPQEGASDKGDKGRMLLRTHTSPVQIRTMQGQEPPIRIIAPGRTYRSDSDATHTPMFHQVEGLVIDKGVHLGHLKWTLETFVRAYFERDDIVLRLRPSYFPFTEPSMEVDVGYTLEKGRRIIGGKQPDGWMEILGSGMVHPNVITACGLDPNVWQGFAFGCGIDRLAMLKYGMDDLRAFFDGDLRWLRHFGFAALDVPTLSGGVGA</sequence>
<comment type="catalytic activity">
    <reaction evidence="1">
        <text>tRNA(Phe) + L-phenylalanine + ATP = L-phenylalanyl-tRNA(Phe) + AMP + diphosphate + H(+)</text>
        <dbReference type="Rhea" id="RHEA:19413"/>
        <dbReference type="Rhea" id="RHEA-COMP:9668"/>
        <dbReference type="Rhea" id="RHEA-COMP:9699"/>
        <dbReference type="ChEBI" id="CHEBI:15378"/>
        <dbReference type="ChEBI" id="CHEBI:30616"/>
        <dbReference type="ChEBI" id="CHEBI:33019"/>
        <dbReference type="ChEBI" id="CHEBI:58095"/>
        <dbReference type="ChEBI" id="CHEBI:78442"/>
        <dbReference type="ChEBI" id="CHEBI:78531"/>
        <dbReference type="ChEBI" id="CHEBI:456215"/>
        <dbReference type="EC" id="6.1.1.20"/>
    </reaction>
</comment>
<comment type="cofactor">
    <cofactor evidence="1">
        <name>Mg(2+)</name>
        <dbReference type="ChEBI" id="CHEBI:18420"/>
    </cofactor>
    <text evidence="1">Binds 2 magnesium ions per tetramer.</text>
</comment>
<comment type="subunit">
    <text evidence="1">Tetramer of two alpha and two beta subunits.</text>
</comment>
<comment type="subcellular location">
    <subcellularLocation>
        <location evidence="1">Cytoplasm</location>
    </subcellularLocation>
</comment>
<comment type="similarity">
    <text evidence="1">Belongs to the class-II aminoacyl-tRNA synthetase family. Phe-tRNA synthetase alpha subunit type 1 subfamily.</text>
</comment>
<comment type="sequence caution" evidence="2">
    <conflict type="erroneous initiation">
        <sequence resource="EMBL-CDS" id="AAV90138"/>
    </conflict>
</comment>
<proteinExistence type="inferred from homology"/>
<evidence type="ECO:0000255" key="1">
    <source>
        <dbReference type="HAMAP-Rule" id="MF_00281"/>
    </source>
</evidence>
<evidence type="ECO:0000305" key="2"/>
<reference key="1">
    <citation type="journal article" date="2005" name="Nat. Biotechnol.">
        <title>The genome sequence of the ethanologenic bacterium Zymomonas mobilis ZM4.</title>
        <authorList>
            <person name="Seo J.-S."/>
            <person name="Chong H."/>
            <person name="Park H.S."/>
            <person name="Yoon K.-O."/>
            <person name="Jung C."/>
            <person name="Kim J.J."/>
            <person name="Hong J.H."/>
            <person name="Kim H."/>
            <person name="Kim J.-H."/>
            <person name="Kil J.-I."/>
            <person name="Park C.J."/>
            <person name="Oh H.-M."/>
            <person name="Lee J.-S."/>
            <person name="Jin S.-J."/>
            <person name="Um H.-W."/>
            <person name="Lee H.-J."/>
            <person name="Oh S.-J."/>
            <person name="Kim J.Y."/>
            <person name="Kang H.L."/>
            <person name="Lee S.Y."/>
            <person name="Lee K.J."/>
            <person name="Kang H.S."/>
        </authorList>
    </citation>
    <scope>NUCLEOTIDE SEQUENCE [LARGE SCALE GENOMIC DNA]</scope>
    <source>
        <strain>ATCC 31821 / ZM4 / CP4</strain>
    </source>
</reference>
<protein>
    <recommendedName>
        <fullName evidence="1">Phenylalanine--tRNA ligase alpha subunit</fullName>
        <ecNumber evidence="1">6.1.1.20</ecNumber>
    </recommendedName>
    <alternativeName>
        <fullName evidence="1">Phenylalanyl-tRNA synthetase alpha subunit</fullName>
        <shortName evidence="1">PheRS</shortName>
    </alternativeName>
</protein>
<keyword id="KW-0030">Aminoacyl-tRNA synthetase</keyword>
<keyword id="KW-0067">ATP-binding</keyword>
<keyword id="KW-0963">Cytoplasm</keyword>
<keyword id="KW-0436">Ligase</keyword>
<keyword id="KW-0460">Magnesium</keyword>
<keyword id="KW-0479">Metal-binding</keyword>
<keyword id="KW-0547">Nucleotide-binding</keyword>
<keyword id="KW-0648">Protein biosynthesis</keyword>
<keyword id="KW-1185">Reference proteome</keyword>
<gene>
    <name evidence="1" type="primary">pheS</name>
    <name type="ordered locus">ZMO1514</name>
</gene>
<feature type="chain" id="PRO_0000232043" description="Phenylalanine--tRNA ligase alpha subunit">
    <location>
        <begin position="1"/>
        <end position="366"/>
    </location>
</feature>
<feature type="binding site" evidence="1">
    <location>
        <position position="264"/>
    </location>
    <ligand>
        <name>Mg(2+)</name>
        <dbReference type="ChEBI" id="CHEBI:18420"/>
        <note>shared with beta subunit</note>
    </ligand>
</feature>
<dbReference type="EC" id="6.1.1.20" evidence="1"/>
<dbReference type="EMBL" id="AE008692">
    <property type="protein sequence ID" value="AAV90138.2"/>
    <property type="status" value="ALT_INIT"/>
    <property type="molecule type" value="Genomic_DNA"/>
</dbReference>
<dbReference type="SMR" id="Q5NMC2"/>
<dbReference type="STRING" id="264203.ZMO1514"/>
<dbReference type="KEGG" id="zmo:ZMO1514"/>
<dbReference type="eggNOG" id="COG0016">
    <property type="taxonomic scope" value="Bacteria"/>
</dbReference>
<dbReference type="HOGENOM" id="CLU_025086_0_1_5"/>
<dbReference type="Proteomes" id="UP000001173">
    <property type="component" value="Chromosome"/>
</dbReference>
<dbReference type="GO" id="GO:0005737">
    <property type="term" value="C:cytoplasm"/>
    <property type="evidence" value="ECO:0007669"/>
    <property type="project" value="UniProtKB-SubCell"/>
</dbReference>
<dbReference type="GO" id="GO:0005524">
    <property type="term" value="F:ATP binding"/>
    <property type="evidence" value="ECO:0007669"/>
    <property type="project" value="UniProtKB-UniRule"/>
</dbReference>
<dbReference type="GO" id="GO:0000287">
    <property type="term" value="F:magnesium ion binding"/>
    <property type="evidence" value="ECO:0007669"/>
    <property type="project" value="UniProtKB-UniRule"/>
</dbReference>
<dbReference type="GO" id="GO:0004826">
    <property type="term" value="F:phenylalanine-tRNA ligase activity"/>
    <property type="evidence" value="ECO:0007669"/>
    <property type="project" value="UniProtKB-UniRule"/>
</dbReference>
<dbReference type="GO" id="GO:0000049">
    <property type="term" value="F:tRNA binding"/>
    <property type="evidence" value="ECO:0007669"/>
    <property type="project" value="InterPro"/>
</dbReference>
<dbReference type="GO" id="GO:0006432">
    <property type="term" value="P:phenylalanyl-tRNA aminoacylation"/>
    <property type="evidence" value="ECO:0007669"/>
    <property type="project" value="UniProtKB-UniRule"/>
</dbReference>
<dbReference type="CDD" id="cd00496">
    <property type="entry name" value="PheRS_alpha_core"/>
    <property type="match status" value="1"/>
</dbReference>
<dbReference type="FunFam" id="3.30.930.10:FF:000003">
    <property type="entry name" value="Phenylalanine--tRNA ligase alpha subunit"/>
    <property type="match status" value="1"/>
</dbReference>
<dbReference type="Gene3D" id="3.30.930.10">
    <property type="entry name" value="Bira Bifunctional Protein, Domain 2"/>
    <property type="match status" value="1"/>
</dbReference>
<dbReference type="HAMAP" id="MF_00281">
    <property type="entry name" value="Phe_tRNA_synth_alpha1"/>
    <property type="match status" value="1"/>
</dbReference>
<dbReference type="InterPro" id="IPR006195">
    <property type="entry name" value="aa-tRNA-synth_II"/>
</dbReference>
<dbReference type="InterPro" id="IPR045864">
    <property type="entry name" value="aa-tRNA-synth_II/BPL/LPL"/>
</dbReference>
<dbReference type="InterPro" id="IPR004529">
    <property type="entry name" value="Phe-tRNA-synth_IIc_asu"/>
</dbReference>
<dbReference type="InterPro" id="IPR004188">
    <property type="entry name" value="Phe-tRNA_ligase_II_N"/>
</dbReference>
<dbReference type="InterPro" id="IPR022911">
    <property type="entry name" value="Phe_tRNA_ligase_alpha1_bac"/>
</dbReference>
<dbReference type="InterPro" id="IPR002319">
    <property type="entry name" value="Phenylalanyl-tRNA_Synthase"/>
</dbReference>
<dbReference type="InterPro" id="IPR010978">
    <property type="entry name" value="tRNA-bd_arm"/>
</dbReference>
<dbReference type="NCBIfam" id="TIGR00468">
    <property type="entry name" value="pheS"/>
    <property type="match status" value="1"/>
</dbReference>
<dbReference type="PANTHER" id="PTHR11538:SF41">
    <property type="entry name" value="PHENYLALANINE--TRNA LIGASE, MITOCHONDRIAL"/>
    <property type="match status" value="1"/>
</dbReference>
<dbReference type="PANTHER" id="PTHR11538">
    <property type="entry name" value="PHENYLALANYL-TRNA SYNTHETASE"/>
    <property type="match status" value="1"/>
</dbReference>
<dbReference type="Pfam" id="PF02912">
    <property type="entry name" value="Phe_tRNA-synt_N"/>
    <property type="match status" value="1"/>
</dbReference>
<dbReference type="Pfam" id="PF01409">
    <property type="entry name" value="tRNA-synt_2d"/>
    <property type="match status" value="1"/>
</dbReference>
<dbReference type="SUPFAM" id="SSF55681">
    <property type="entry name" value="Class II aaRS and biotin synthetases"/>
    <property type="match status" value="1"/>
</dbReference>
<dbReference type="SUPFAM" id="SSF46589">
    <property type="entry name" value="tRNA-binding arm"/>
    <property type="match status" value="1"/>
</dbReference>
<dbReference type="PROSITE" id="PS50862">
    <property type="entry name" value="AA_TRNA_LIGASE_II"/>
    <property type="match status" value="1"/>
</dbReference>
<organism>
    <name type="scientific">Zymomonas mobilis subsp. mobilis (strain ATCC 31821 / ZM4 / CP4)</name>
    <dbReference type="NCBI Taxonomy" id="264203"/>
    <lineage>
        <taxon>Bacteria</taxon>
        <taxon>Pseudomonadati</taxon>
        <taxon>Pseudomonadota</taxon>
        <taxon>Alphaproteobacteria</taxon>
        <taxon>Sphingomonadales</taxon>
        <taxon>Zymomonadaceae</taxon>
        <taxon>Zymomonas</taxon>
    </lineage>
</organism>
<name>SYFA_ZYMMO</name>
<accession>Q5NMC2</accession>